<dbReference type="EMBL" id="X71433">
    <property type="protein sequence ID" value="CAA50564.1"/>
    <property type="molecule type" value="mRNA"/>
</dbReference>
<dbReference type="EMBL" id="BC094138">
    <property type="protein sequence ID" value="AAH94138.1"/>
    <property type="molecule type" value="mRNA"/>
</dbReference>
<dbReference type="PIR" id="I51642">
    <property type="entry name" value="I51642"/>
</dbReference>
<dbReference type="SMR" id="Q09001"/>
<dbReference type="DNASU" id="494676"/>
<dbReference type="GeneID" id="494676"/>
<dbReference type="KEGG" id="xla:494676"/>
<dbReference type="AGR" id="Xenbase:XB-GENE-962969"/>
<dbReference type="CTD" id="494676"/>
<dbReference type="Xenbase" id="XB-GENE-962969">
    <property type="gene designation" value="stmn2.L"/>
</dbReference>
<dbReference type="OMA" id="PRNINAY"/>
<dbReference type="OrthoDB" id="5986631at2759"/>
<dbReference type="Proteomes" id="UP000186698">
    <property type="component" value="Chromosome 6L"/>
</dbReference>
<dbReference type="Bgee" id="494676">
    <property type="expression patterns" value="Expressed in brain and 13 other cell types or tissues"/>
</dbReference>
<dbReference type="GO" id="GO:0005737">
    <property type="term" value="C:cytoplasm"/>
    <property type="evidence" value="ECO:0000250"/>
    <property type="project" value="UniProtKB"/>
</dbReference>
<dbReference type="GO" id="GO:0030426">
    <property type="term" value="C:growth cone"/>
    <property type="evidence" value="ECO:0000250"/>
    <property type="project" value="UniProtKB"/>
</dbReference>
<dbReference type="GO" id="GO:0030027">
    <property type="term" value="C:lamellipodium"/>
    <property type="evidence" value="ECO:0000250"/>
    <property type="project" value="UniProtKB"/>
</dbReference>
<dbReference type="GO" id="GO:0016020">
    <property type="term" value="C:membrane"/>
    <property type="evidence" value="ECO:0007669"/>
    <property type="project" value="UniProtKB-SubCell"/>
</dbReference>
<dbReference type="GO" id="GO:0043005">
    <property type="term" value="C:neuron projection"/>
    <property type="evidence" value="ECO:0000250"/>
    <property type="project" value="UniProtKB"/>
</dbReference>
<dbReference type="GO" id="GO:0043025">
    <property type="term" value="C:neuronal cell body"/>
    <property type="evidence" value="ECO:0000250"/>
    <property type="project" value="UniProtKB"/>
</dbReference>
<dbReference type="GO" id="GO:0015631">
    <property type="term" value="F:tubulin binding"/>
    <property type="evidence" value="ECO:0000318"/>
    <property type="project" value="GO_Central"/>
</dbReference>
<dbReference type="GO" id="GO:1990090">
    <property type="term" value="P:cellular response to nerve growth factor stimulus"/>
    <property type="evidence" value="ECO:0000250"/>
    <property type="project" value="UniProtKB"/>
</dbReference>
<dbReference type="GO" id="GO:0007019">
    <property type="term" value="P:microtubule depolymerization"/>
    <property type="evidence" value="ECO:0000318"/>
    <property type="project" value="GO_Central"/>
</dbReference>
<dbReference type="GO" id="GO:0031115">
    <property type="term" value="P:negative regulation of microtubule polymerization"/>
    <property type="evidence" value="ECO:0000250"/>
    <property type="project" value="UniProtKB"/>
</dbReference>
<dbReference type="GO" id="GO:0031175">
    <property type="term" value="P:neuron projection development"/>
    <property type="evidence" value="ECO:0000318"/>
    <property type="project" value="GO_Central"/>
</dbReference>
<dbReference type="GO" id="GO:0010976">
    <property type="term" value="P:positive regulation of neuron projection development"/>
    <property type="evidence" value="ECO:0000250"/>
    <property type="project" value="UniProtKB"/>
</dbReference>
<dbReference type="GO" id="GO:0031110">
    <property type="term" value="P:regulation of microtubule polymerization or depolymerization"/>
    <property type="evidence" value="ECO:0000318"/>
    <property type="project" value="GO_Central"/>
</dbReference>
<dbReference type="Gene3D" id="6.10.280.30">
    <property type="match status" value="1"/>
</dbReference>
<dbReference type="InterPro" id="IPR030514">
    <property type="entry name" value="Stathmin_CS"/>
</dbReference>
<dbReference type="InterPro" id="IPR000956">
    <property type="entry name" value="Stathmin_fam"/>
</dbReference>
<dbReference type="InterPro" id="IPR036002">
    <property type="entry name" value="Stathmin_sf"/>
</dbReference>
<dbReference type="PANTHER" id="PTHR10104">
    <property type="entry name" value="STATHMIN"/>
    <property type="match status" value="1"/>
</dbReference>
<dbReference type="PANTHER" id="PTHR10104:SF18">
    <property type="entry name" value="STATHMIN-2"/>
    <property type="match status" value="1"/>
</dbReference>
<dbReference type="Pfam" id="PF00836">
    <property type="entry name" value="Stathmin"/>
    <property type="match status" value="1"/>
</dbReference>
<dbReference type="PIRSF" id="PIRSF002285">
    <property type="entry name" value="Stathmin"/>
    <property type="match status" value="1"/>
</dbReference>
<dbReference type="PRINTS" id="PR00345">
    <property type="entry name" value="STATHMIN"/>
</dbReference>
<dbReference type="SUPFAM" id="SSF101494">
    <property type="entry name" value="Stathmin"/>
    <property type="match status" value="1"/>
</dbReference>
<dbReference type="PROSITE" id="PS00563">
    <property type="entry name" value="STATHMIN_1"/>
    <property type="match status" value="1"/>
</dbReference>
<dbReference type="PROSITE" id="PS01041">
    <property type="entry name" value="STATHMIN_2"/>
    <property type="match status" value="1"/>
</dbReference>
<dbReference type="PROSITE" id="PS51663">
    <property type="entry name" value="STATHMIN_3"/>
    <property type="match status" value="1"/>
</dbReference>
<name>STM2A_XENLA</name>
<protein>
    <recommendedName>
        <fullName>Stathmin-2-A</fullName>
    </recommendedName>
    <alternativeName>
        <fullName>SCG10 protein homolog A</fullName>
    </alternativeName>
</protein>
<evidence type="ECO:0000250" key="1"/>
<evidence type="ECO:0000255" key="2"/>
<evidence type="ECO:0000255" key="3">
    <source>
        <dbReference type="PROSITE-ProRule" id="PRU00998"/>
    </source>
</evidence>
<evidence type="ECO:0000305" key="4"/>
<accession>Q09001</accession>
<accession>Q52KY8</accession>
<keyword id="KW-0966">Cell projection</keyword>
<keyword id="KW-0175">Coiled coil</keyword>
<keyword id="KW-0963">Cytoplasm</keyword>
<keyword id="KW-0472">Membrane</keyword>
<keyword id="KW-0597">Phosphoprotein</keyword>
<keyword id="KW-1185">Reference proteome</keyword>
<proteinExistence type="evidence at transcript level"/>
<reference key="1">
    <citation type="journal article" date="1993" name="J. Biol. Chem.">
        <title>Stathmin gene family: phylogenetic conservation and developmental regulation in Xenopus.</title>
        <authorList>
            <person name="Maucuer A."/>
            <person name="Moreau J."/>
            <person name="Mechali M."/>
            <person name="Sobel A."/>
        </authorList>
    </citation>
    <scope>NUCLEOTIDE SEQUENCE [MRNA]</scope>
    <source>
        <tissue>Brain</tissue>
    </source>
</reference>
<reference key="2">
    <citation type="submission" date="2005-04" db="EMBL/GenBank/DDBJ databases">
        <authorList>
            <consortium name="NIH - Xenopus Gene Collection (XGC) project"/>
        </authorList>
    </citation>
    <scope>NUCLEOTIDE SEQUENCE [LARGE SCALE MRNA]</scope>
    <source>
        <tissue>Eye</tissue>
    </source>
</reference>
<gene>
    <name type="primary">stmn2-a</name>
</gene>
<comment type="subcellular location">
    <subcellularLocation>
        <location evidence="1">Cytoplasm</location>
    </subcellularLocation>
    <subcellularLocation>
        <location evidence="1">Membrane</location>
        <topology evidence="1">Peripheral membrane protein</topology>
        <orientation evidence="1">Cytoplasmic side</orientation>
    </subcellularLocation>
    <subcellularLocation>
        <location evidence="1">Cell projection</location>
        <location evidence="1">Lamellipodium</location>
    </subcellularLocation>
</comment>
<comment type="tissue specificity">
    <text>Nervous tissue.</text>
</comment>
<comment type="similarity">
    <text evidence="4">Belongs to the stathmin family.</text>
</comment>
<sequence length="178" mass="20716">MAKTAIAYKEKMKELSMLSLICSCFYPEPRNITAYTYDDMEIKQLNKRASGQAFELILKPPSPVSEAPRTLASPKKKDVSLGEIQAKLEAAEDRRKSQEAQILKQLAEKREHEREVLQKALEENNNFSRMAEEKLILKMEQIKENREYYLASLMERLKEKERHAAEVRRNKEQLELSG</sequence>
<feature type="chain" id="PRO_0000182400" description="Stathmin-2-A">
    <location>
        <begin position="1"/>
        <end position="178"/>
    </location>
</feature>
<feature type="domain" description="SLD" evidence="3">
    <location>
        <begin position="38"/>
        <end position="178"/>
    </location>
</feature>
<feature type="coiled-coil region" evidence="2">
    <location>
        <begin position="75"/>
        <end position="178"/>
    </location>
</feature>
<organism>
    <name type="scientific">Xenopus laevis</name>
    <name type="common">African clawed frog</name>
    <dbReference type="NCBI Taxonomy" id="8355"/>
    <lineage>
        <taxon>Eukaryota</taxon>
        <taxon>Metazoa</taxon>
        <taxon>Chordata</taxon>
        <taxon>Craniata</taxon>
        <taxon>Vertebrata</taxon>
        <taxon>Euteleostomi</taxon>
        <taxon>Amphibia</taxon>
        <taxon>Batrachia</taxon>
        <taxon>Anura</taxon>
        <taxon>Pipoidea</taxon>
        <taxon>Pipidae</taxon>
        <taxon>Xenopodinae</taxon>
        <taxon>Xenopus</taxon>
        <taxon>Xenopus</taxon>
    </lineage>
</organism>